<comment type="function">
    <text evidence="1">NDH-1 shuttles electrons from NADH, via FMN and iron-sulfur (Fe-S) centers, to quinones in the respiratory chain. The immediate electron acceptor for the enzyme in this species is believed to be ubiquinone. Couples the redox reaction to proton translocation (for every two electrons transferred, four hydrogen ions are translocated across the cytoplasmic membrane), and thus conserves the redox energy in a proton gradient.</text>
</comment>
<comment type="catalytic activity">
    <reaction evidence="1">
        <text>a quinone + NADH + 5 H(+)(in) = a quinol + NAD(+) + 4 H(+)(out)</text>
        <dbReference type="Rhea" id="RHEA:57888"/>
        <dbReference type="ChEBI" id="CHEBI:15378"/>
        <dbReference type="ChEBI" id="CHEBI:24646"/>
        <dbReference type="ChEBI" id="CHEBI:57540"/>
        <dbReference type="ChEBI" id="CHEBI:57945"/>
        <dbReference type="ChEBI" id="CHEBI:132124"/>
    </reaction>
</comment>
<comment type="subunit">
    <text evidence="1">NDH-1 is composed of 14 different subunits. Subunits NuoA, H, J, K, L, M, N constitute the membrane sector of the complex.</text>
</comment>
<comment type="subcellular location">
    <subcellularLocation>
        <location evidence="1">Cell inner membrane</location>
        <topology evidence="1">Multi-pass membrane protein</topology>
    </subcellularLocation>
</comment>
<comment type="similarity">
    <text evidence="1">Belongs to the complex I subunit 4L family.</text>
</comment>
<sequence length="101" mass="10779">MIGLADYLILGALLFSLGVAGIFINRKNLLVLLMCIELILLAVNMNFIAFSAYLQDLAGQVFVFFILTVAAAEAAIGLAIVVALFRNRGSINVGDLDSMKG</sequence>
<keyword id="KW-0997">Cell inner membrane</keyword>
<keyword id="KW-1003">Cell membrane</keyword>
<keyword id="KW-0472">Membrane</keyword>
<keyword id="KW-0520">NAD</keyword>
<keyword id="KW-0874">Quinone</keyword>
<keyword id="KW-1185">Reference proteome</keyword>
<keyword id="KW-1278">Translocase</keyword>
<keyword id="KW-0812">Transmembrane</keyword>
<keyword id="KW-1133">Transmembrane helix</keyword>
<keyword id="KW-0813">Transport</keyword>
<keyword id="KW-0830">Ubiquinone</keyword>
<feature type="chain" id="PRO_0000389924" description="NADH-quinone oxidoreductase subunit K">
    <location>
        <begin position="1"/>
        <end position="101"/>
    </location>
</feature>
<feature type="transmembrane region" description="Helical" evidence="1">
    <location>
        <begin position="4"/>
        <end position="24"/>
    </location>
</feature>
<feature type="transmembrane region" description="Helical" evidence="1">
    <location>
        <begin position="30"/>
        <end position="50"/>
    </location>
</feature>
<feature type="transmembrane region" description="Helical" evidence="1">
    <location>
        <begin position="61"/>
        <end position="81"/>
    </location>
</feature>
<gene>
    <name evidence="1" type="primary">nuoK</name>
    <name type="ordered locus">Mlg_1960</name>
</gene>
<proteinExistence type="inferred from homology"/>
<accession>Q0A785</accession>
<dbReference type="EC" id="7.1.1.-" evidence="1"/>
<dbReference type="EMBL" id="CP000453">
    <property type="protein sequence ID" value="ABI57302.1"/>
    <property type="molecule type" value="Genomic_DNA"/>
</dbReference>
<dbReference type="RefSeq" id="WP_011629696.1">
    <property type="nucleotide sequence ID" value="NC_008340.1"/>
</dbReference>
<dbReference type="SMR" id="Q0A785"/>
<dbReference type="KEGG" id="aeh:Mlg_1960"/>
<dbReference type="eggNOG" id="COG0713">
    <property type="taxonomic scope" value="Bacteria"/>
</dbReference>
<dbReference type="HOGENOM" id="CLU_144724_2_0_6"/>
<dbReference type="Proteomes" id="UP000001962">
    <property type="component" value="Chromosome"/>
</dbReference>
<dbReference type="GO" id="GO:0030964">
    <property type="term" value="C:NADH dehydrogenase complex"/>
    <property type="evidence" value="ECO:0007669"/>
    <property type="project" value="TreeGrafter"/>
</dbReference>
<dbReference type="GO" id="GO:0005886">
    <property type="term" value="C:plasma membrane"/>
    <property type="evidence" value="ECO:0007669"/>
    <property type="project" value="UniProtKB-SubCell"/>
</dbReference>
<dbReference type="GO" id="GO:0050136">
    <property type="term" value="F:NADH:ubiquinone reductase (non-electrogenic) activity"/>
    <property type="evidence" value="ECO:0007669"/>
    <property type="project" value="UniProtKB-UniRule"/>
</dbReference>
<dbReference type="GO" id="GO:0048038">
    <property type="term" value="F:quinone binding"/>
    <property type="evidence" value="ECO:0007669"/>
    <property type="project" value="UniProtKB-KW"/>
</dbReference>
<dbReference type="GO" id="GO:0042773">
    <property type="term" value="P:ATP synthesis coupled electron transport"/>
    <property type="evidence" value="ECO:0007669"/>
    <property type="project" value="InterPro"/>
</dbReference>
<dbReference type="FunFam" id="1.10.287.3510:FF:000001">
    <property type="entry name" value="NADH-quinone oxidoreductase subunit K"/>
    <property type="match status" value="1"/>
</dbReference>
<dbReference type="Gene3D" id="1.10.287.3510">
    <property type="match status" value="1"/>
</dbReference>
<dbReference type="HAMAP" id="MF_01456">
    <property type="entry name" value="NDH1_NuoK"/>
    <property type="match status" value="1"/>
</dbReference>
<dbReference type="InterPro" id="IPR001133">
    <property type="entry name" value="NADH_UbQ_OxRdtase_chain4L/K"/>
</dbReference>
<dbReference type="InterPro" id="IPR039428">
    <property type="entry name" value="NUOK/Mnh_C1-like"/>
</dbReference>
<dbReference type="NCBIfam" id="NF004320">
    <property type="entry name" value="PRK05715.1-2"/>
    <property type="match status" value="1"/>
</dbReference>
<dbReference type="NCBIfam" id="NF004321">
    <property type="entry name" value="PRK05715.1-3"/>
    <property type="match status" value="1"/>
</dbReference>
<dbReference type="NCBIfam" id="NF004323">
    <property type="entry name" value="PRK05715.1-5"/>
    <property type="match status" value="1"/>
</dbReference>
<dbReference type="PANTHER" id="PTHR11434:SF21">
    <property type="entry name" value="NADH DEHYDROGENASE SUBUNIT 4L-RELATED"/>
    <property type="match status" value="1"/>
</dbReference>
<dbReference type="PANTHER" id="PTHR11434">
    <property type="entry name" value="NADH-UBIQUINONE OXIDOREDUCTASE SUBUNIT ND4L"/>
    <property type="match status" value="1"/>
</dbReference>
<dbReference type="Pfam" id="PF00420">
    <property type="entry name" value="Oxidored_q2"/>
    <property type="match status" value="1"/>
</dbReference>
<protein>
    <recommendedName>
        <fullName evidence="1">NADH-quinone oxidoreductase subunit K</fullName>
        <ecNumber evidence="1">7.1.1.-</ecNumber>
    </recommendedName>
    <alternativeName>
        <fullName evidence="1">NADH dehydrogenase I subunit K</fullName>
    </alternativeName>
    <alternativeName>
        <fullName evidence="1">NDH-1 subunit K</fullName>
    </alternativeName>
</protein>
<reference key="1">
    <citation type="submission" date="2006-08" db="EMBL/GenBank/DDBJ databases">
        <title>Complete sequence of Alkalilimnicola ehrilichei MLHE-1.</title>
        <authorList>
            <person name="Copeland A."/>
            <person name="Lucas S."/>
            <person name="Lapidus A."/>
            <person name="Barry K."/>
            <person name="Detter J.C."/>
            <person name="Glavina del Rio T."/>
            <person name="Hammon N."/>
            <person name="Israni S."/>
            <person name="Dalin E."/>
            <person name="Tice H."/>
            <person name="Pitluck S."/>
            <person name="Sims D."/>
            <person name="Brettin T."/>
            <person name="Bruce D."/>
            <person name="Han C."/>
            <person name="Tapia R."/>
            <person name="Gilna P."/>
            <person name="Schmutz J."/>
            <person name="Larimer F."/>
            <person name="Land M."/>
            <person name="Hauser L."/>
            <person name="Kyrpides N."/>
            <person name="Mikhailova N."/>
            <person name="Oremland R.S."/>
            <person name="Hoeft S.E."/>
            <person name="Switzer-Blum J."/>
            <person name="Kulp T."/>
            <person name="King G."/>
            <person name="Tabita R."/>
            <person name="Witte B."/>
            <person name="Santini J.M."/>
            <person name="Basu P."/>
            <person name="Hollibaugh J.T."/>
            <person name="Xie G."/>
            <person name="Stolz J.F."/>
            <person name="Richardson P."/>
        </authorList>
    </citation>
    <scope>NUCLEOTIDE SEQUENCE [LARGE SCALE GENOMIC DNA]</scope>
    <source>
        <strain>ATCC BAA-1101 / DSM 17681 / MLHE-1</strain>
    </source>
</reference>
<organism>
    <name type="scientific">Alkalilimnicola ehrlichii (strain ATCC BAA-1101 / DSM 17681 / MLHE-1)</name>
    <dbReference type="NCBI Taxonomy" id="187272"/>
    <lineage>
        <taxon>Bacteria</taxon>
        <taxon>Pseudomonadati</taxon>
        <taxon>Pseudomonadota</taxon>
        <taxon>Gammaproteobacteria</taxon>
        <taxon>Chromatiales</taxon>
        <taxon>Ectothiorhodospiraceae</taxon>
        <taxon>Alkalilimnicola</taxon>
    </lineage>
</organism>
<name>NUOK_ALKEH</name>
<evidence type="ECO:0000255" key="1">
    <source>
        <dbReference type="HAMAP-Rule" id="MF_01456"/>
    </source>
</evidence>